<keyword id="KW-0418">Kinase</keyword>
<keyword id="KW-0547">Nucleotide-binding</keyword>
<keyword id="KW-1185">Reference proteome</keyword>
<keyword id="KW-0723">Serine/threonine-protein kinase</keyword>
<keyword id="KW-0808">Transferase</keyword>
<evidence type="ECO:0000255" key="1">
    <source>
        <dbReference type="HAMAP-Rule" id="MF_00921"/>
    </source>
</evidence>
<dbReference type="EC" id="2.7.11.32" evidence="1"/>
<dbReference type="EC" id="2.7.4.27" evidence="1"/>
<dbReference type="EMBL" id="CU234118">
    <property type="protein sequence ID" value="CAL74164.1"/>
    <property type="molecule type" value="Genomic_DNA"/>
</dbReference>
<dbReference type="RefSeq" id="WP_011923453.1">
    <property type="nucleotide sequence ID" value="NC_009445.1"/>
</dbReference>
<dbReference type="SMR" id="A4YJT8"/>
<dbReference type="STRING" id="114615.BRADO0199"/>
<dbReference type="KEGG" id="bra:BRADO0199"/>
<dbReference type="eggNOG" id="COG1806">
    <property type="taxonomic scope" value="Bacteria"/>
</dbReference>
<dbReference type="HOGENOM" id="CLU_046206_2_0_5"/>
<dbReference type="OrthoDB" id="9782201at2"/>
<dbReference type="Proteomes" id="UP000001994">
    <property type="component" value="Chromosome"/>
</dbReference>
<dbReference type="GO" id="GO:0043531">
    <property type="term" value="F:ADP binding"/>
    <property type="evidence" value="ECO:0007669"/>
    <property type="project" value="UniProtKB-UniRule"/>
</dbReference>
<dbReference type="GO" id="GO:0005524">
    <property type="term" value="F:ATP binding"/>
    <property type="evidence" value="ECO:0007669"/>
    <property type="project" value="InterPro"/>
</dbReference>
<dbReference type="GO" id="GO:0016776">
    <property type="term" value="F:phosphotransferase activity, phosphate group as acceptor"/>
    <property type="evidence" value="ECO:0007669"/>
    <property type="project" value="UniProtKB-UniRule"/>
</dbReference>
<dbReference type="GO" id="GO:0004674">
    <property type="term" value="F:protein serine/threonine kinase activity"/>
    <property type="evidence" value="ECO:0007669"/>
    <property type="project" value="UniProtKB-UniRule"/>
</dbReference>
<dbReference type="HAMAP" id="MF_00921">
    <property type="entry name" value="PDRP"/>
    <property type="match status" value="1"/>
</dbReference>
<dbReference type="InterPro" id="IPR005177">
    <property type="entry name" value="Kinase-pyrophosphorylase"/>
</dbReference>
<dbReference type="InterPro" id="IPR026565">
    <property type="entry name" value="PPDK_reg"/>
</dbReference>
<dbReference type="NCBIfam" id="NF003742">
    <property type="entry name" value="PRK05339.1"/>
    <property type="match status" value="1"/>
</dbReference>
<dbReference type="PANTHER" id="PTHR31756">
    <property type="entry name" value="PYRUVATE, PHOSPHATE DIKINASE REGULATORY PROTEIN 1, CHLOROPLASTIC"/>
    <property type="match status" value="1"/>
</dbReference>
<dbReference type="PANTHER" id="PTHR31756:SF3">
    <property type="entry name" value="PYRUVATE, PHOSPHATE DIKINASE REGULATORY PROTEIN 1, CHLOROPLASTIC"/>
    <property type="match status" value="1"/>
</dbReference>
<dbReference type="Pfam" id="PF03618">
    <property type="entry name" value="Kinase-PPPase"/>
    <property type="match status" value="1"/>
</dbReference>
<comment type="function">
    <text evidence="1">Bifunctional serine/threonine kinase and phosphorylase involved in the regulation of the pyruvate, phosphate dikinase (PPDK) by catalyzing its phosphorylation/dephosphorylation.</text>
</comment>
<comment type="catalytic activity">
    <reaction evidence="1">
        <text>N(tele)-phospho-L-histidyl/L-threonyl-[pyruvate, phosphate dikinase] + ADP = N(tele)-phospho-L-histidyl/O-phospho-L-threonyl-[pyruvate, phosphate dikinase] + AMP + H(+)</text>
        <dbReference type="Rhea" id="RHEA:43692"/>
        <dbReference type="Rhea" id="RHEA-COMP:10650"/>
        <dbReference type="Rhea" id="RHEA-COMP:10651"/>
        <dbReference type="ChEBI" id="CHEBI:15378"/>
        <dbReference type="ChEBI" id="CHEBI:30013"/>
        <dbReference type="ChEBI" id="CHEBI:61977"/>
        <dbReference type="ChEBI" id="CHEBI:83586"/>
        <dbReference type="ChEBI" id="CHEBI:456215"/>
        <dbReference type="ChEBI" id="CHEBI:456216"/>
        <dbReference type="EC" id="2.7.11.32"/>
    </reaction>
</comment>
<comment type="catalytic activity">
    <reaction evidence="1">
        <text>N(tele)-phospho-L-histidyl/O-phospho-L-threonyl-[pyruvate, phosphate dikinase] + phosphate + H(+) = N(tele)-phospho-L-histidyl/L-threonyl-[pyruvate, phosphate dikinase] + diphosphate</text>
        <dbReference type="Rhea" id="RHEA:43696"/>
        <dbReference type="Rhea" id="RHEA-COMP:10650"/>
        <dbReference type="Rhea" id="RHEA-COMP:10651"/>
        <dbReference type="ChEBI" id="CHEBI:15378"/>
        <dbReference type="ChEBI" id="CHEBI:30013"/>
        <dbReference type="ChEBI" id="CHEBI:33019"/>
        <dbReference type="ChEBI" id="CHEBI:43474"/>
        <dbReference type="ChEBI" id="CHEBI:61977"/>
        <dbReference type="ChEBI" id="CHEBI:83586"/>
        <dbReference type="EC" id="2.7.4.27"/>
    </reaction>
</comment>
<comment type="similarity">
    <text evidence="1">Belongs to the pyruvate, phosphate/water dikinase regulatory protein family. PDRP subfamily.</text>
</comment>
<reference key="1">
    <citation type="journal article" date="2007" name="Science">
        <title>Legumes symbioses: absence of nod genes in photosynthetic bradyrhizobia.</title>
        <authorList>
            <person name="Giraud E."/>
            <person name="Moulin L."/>
            <person name="Vallenet D."/>
            <person name="Barbe V."/>
            <person name="Cytryn E."/>
            <person name="Avarre J.-C."/>
            <person name="Jaubert M."/>
            <person name="Simon D."/>
            <person name="Cartieaux F."/>
            <person name="Prin Y."/>
            <person name="Bena G."/>
            <person name="Hannibal L."/>
            <person name="Fardoux J."/>
            <person name="Kojadinovic M."/>
            <person name="Vuillet L."/>
            <person name="Lajus A."/>
            <person name="Cruveiller S."/>
            <person name="Rouy Z."/>
            <person name="Mangenot S."/>
            <person name="Segurens B."/>
            <person name="Dossat C."/>
            <person name="Franck W.L."/>
            <person name="Chang W.-S."/>
            <person name="Saunders E."/>
            <person name="Bruce D."/>
            <person name="Richardson P."/>
            <person name="Normand P."/>
            <person name="Dreyfus B."/>
            <person name="Pignol D."/>
            <person name="Stacey G."/>
            <person name="Emerich D."/>
            <person name="Vermeglio A."/>
            <person name="Medigue C."/>
            <person name="Sadowsky M."/>
        </authorList>
    </citation>
    <scope>NUCLEOTIDE SEQUENCE [LARGE SCALE GENOMIC DNA]</scope>
    <source>
        <strain>ORS 278</strain>
    </source>
</reference>
<name>PDRP_BRASO</name>
<feature type="chain" id="PRO_0000316640" description="Putative pyruvate, phosphate dikinase regulatory protein">
    <location>
        <begin position="1"/>
        <end position="279"/>
    </location>
</feature>
<feature type="binding site" evidence="1">
    <location>
        <begin position="153"/>
        <end position="160"/>
    </location>
    <ligand>
        <name>ADP</name>
        <dbReference type="ChEBI" id="CHEBI:456216"/>
    </ligand>
</feature>
<sequence length="279" mass="30926">MPTTGNYFHLHLVSDSTGETLITVARAVAAQYANVTPVEHVYPLVRSQKQLDRVLDEIEEAPGIVLFTLLEKDLVSRLEAKCQQINIPSLSIIGPVMQLFEAYLGASTAGRVGAQHVLNAEYFARIDALNYTMLHDDGQMVDGLEDADVVLVGVSRTSKTPTSIYLANRGVRTANVPLVPGIPIPHQLEVLKKPLVVSLHATPERLIQVRQNRLLSMGAESGNENYVDKQSVTDEVAYARKLSAKFNWVMLDVTRRSIEETAAAILKLYSDRQRQRLPE</sequence>
<gene>
    <name type="ordered locus">BRADO0199</name>
</gene>
<proteinExistence type="inferred from homology"/>
<accession>A4YJT8</accession>
<organism>
    <name type="scientific">Bradyrhizobium sp. (strain ORS 278)</name>
    <dbReference type="NCBI Taxonomy" id="114615"/>
    <lineage>
        <taxon>Bacteria</taxon>
        <taxon>Pseudomonadati</taxon>
        <taxon>Pseudomonadota</taxon>
        <taxon>Alphaproteobacteria</taxon>
        <taxon>Hyphomicrobiales</taxon>
        <taxon>Nitrobacteraceae</taxon>
        <taxon>Bradyrhizobium</taxon>
    </lineage>
</organism>
<protein>
    <recommendedName>
        <fullName evidence="1">Putative pyruvate, phosphate dikinase regulatory protein</fullName>
        <shortName evidence="1">PPDK regulatory protein</shortName>
        <ecNumber evidence="1">2.7.11.32</ecNumber>
        <ecNumber evidence="1">2.7.4.27</ecNumber>
    </recommendedName>
</protein>